<evidence type="ECO:0000305" key="1"/>
<dbReference type="EMBL" id="FR798989">
    <property type="protein sequence ID" value="CAM42071.1"/>
    <property type="molecule type" value="Genomic_DNA"/>
</dbReference>
<dbReference type="RefSeq" id="XP_001563502.1">
    <property type="nucleotide sequence ID" value="XM_001563452.1"/>
</dbReference>
<dbReference type="SMR" id="A4H823"/>
<dbReference type="STRING" id="5660.A4H823"/>
<dbReference type="GeneID" id="5414020"/>
<dbReference type="KEGG" id="lbz:LBRM_15_0540"/>
<dbReference type="VEuPathDB" id="TriTrypDB:LbrM.15.0540"/>
<dbReference type="InParanoid" id="A4H823"/>
<dbReference type="OMA" id="PKAEKGM"/>
<dbReference type="Proteomes" id="UP000007258">
    <property type="component" value="Chromosome 15"/>
</dbReference>
<dbReference type="GO" id="GO:0004867">
    <property type="term" value="F:serine-type endopeptidase inhibitor activity"/>
    <property type="evidence" value="ECO:0007669"/>
    <property type="project" value="InterPro"/>
</dbReference>
<dbReference type="Gene3D" id="2.60.40.550">
    <property type="entry name" value="Ecotin"/>
    <property type="match status" value="1"/>
</dbReference>
<dbReference type="Gene3D" id="4.10.1230.10">
    <property type="entry name" value="Ecotin, trypsin inhibitor"/>
    <property type="match status" value="1"/>
</dbReference>
<dbReference type="InterPro" id="IPR027438">
    <property type="entry name" value="Ecotin_C"/>
</dbReference>
<dbReference type="InterPro" id="IPR036198">
    <property type="entry name" value="Ecotin_sf"/>
</dbReference>
<dbReference type="InterPro" id="IPR005658">
    <property type="entry name" value="Prot_inh_ecotin"/>
</dbReference>
<dbReference type="PANTHER" id="PTHR35890">
    <property type="match status" value="1"/>
</dbReference>
<dbReference type="PANTHER" id="PTHR35890:SF3">
    <property type="entry name" value="ECOTIN"/>
    <property type="match status" value="1"/>
</dbReference>
<dbReference type="Pfam" id="PF03974">
    <property type="entry name" value="Ecotin"/>
    <property type="match status" value="1"/>
</dbReference>
<dbReference type="SUPFAM" id="SSF49772">
    <property type="entry name" value="Ecotin, trypsin inhibitor"/>
    <property type="match status" value="1"/>
</dbReference>
<feature type="chain" id="PRO_0000291593" description="Ecotin-like protein 2">
    <location>
        <begin position="1"/>
        <end position="154"/>
    </location>
</feature>
<accession>A4H823</accession>
<keyword id="KW-1185">Reference proteome</keyword>
<gene>
    <name type="ORF">LbrM15_V2.0540</name>
    <name type="ORF">LbrM_15_0540</name>
</gene>
<sequence>MSAAAGKTLADYKAPYPKPTSRQRRYVILLDPKGDNAELNDYKVELIPGRVKLLDGANHYFLGGKIEEKTIDGWGYPYYVVTLAEMAGTAMLPLGNAAHKKLRFVPLHTSSLYRYNSKLPIVVYVPKDGVLRYRIWTAKLSGRGKAKSIKAKEM</sequence>
<protein>
    <recommendedName>
        <fullName>Ecotin-like protein 2</fullName>
    </recommendedName>
</protein>
<name>ECOT2_LEIBR</name>
<comment type="similarity">
    <text evidence="1">Belongs to the protease inhibitor I11 (ecotin) family.</text>
</comment>
<proteinExistence type="inferred from homology"/>
<reference key="1">
    <citation type="journal article" date="2007" name="Nat. Genet.">
        <title>Comparative genomic analysis of three Leishmania species that cause diverse human disease.</title>
        <authorList>
            <person name="Peacock C.S."/>
            <person name="Seeger K."/>
            <person name="Harris D."/>
            <person name="Murphy L."/>
            <person name="Ruiz J.C."/>
            <person name="Quail M.A."/>
            <person name="Peters N."/>
            <person name="Adlem E."/>
            <person name="Tivey A."/>
            <person name="Aslett M."/>
            <person name="Kerhornou A."/>
            <person name="Ivens A."/>
            <person name="Fraser A."/>
            <person name="Rajandream M.-A."/>
            <person name="Carver T."/>
            <person name="Norbertczak H."/>
            <person name="Chillingworth T."/>
            <person name="Hance Z."/>
            <person name="Jagels K."/>
            <person name="Moule S."/>
            <person name="Ormond D."/>
            <person name="Rutter S."/>
            <person name="Sqaures R."/>
            <person name="Whitehead S."/>
            <person name="Rabbinowitsch E."/>
            <person name="Arrowsmith C."/>
            <person name="White B."/>
            <person name="Thurston S."/>
            <person name="Bringaud F."/>
            <person name="Baldauf S.L."/>
            <person name="Faulconbridge A."/>
            <person name="Jeffares D."/>
            <person name="Depledge D.P."/>
            <person name="Oyola S.O."/>
            <person name="Hilley J.D."/>
            <person name="Brito L.O."/>
            <person name="Tosi L.R.O."/>
            <person name="Barrell B."/>
            <person name="Cruz A.K."/>
            <person name="Mottram J.C."/>
            <person name="Smith D.F."/>
            <person name="Berriman M."/>
        </authorList>
    </citation>
    <scope>NUCLEOTIDE SEQUENCE [LARGE SCALE GENOMIC DNA]</scope>
    <source>
        <strain>MHOM/BR/75/M2904</strain>
    </source>
</reference>
<organism>
    <name type="scientific">Leishmania braziliensis</name>
    <dbReference type="NCBI Taxonomy" id="5660"/>
    <lineage>
        <taxon>Eukaryota</taxon>
        <taxon>Discoba</taxon>
        <taxon>Euglenozoa</taxon>
        <taxon>Kinetoplastea</taxon>
        <taxon>Metakinetoplastina</taxon>
        <taxon>Trypanosomatida</taxon>
        <taxon>Trypanosomatidae</taxon>
        <taxon>Leishmaniinae</taxon>
        <taxon>Leishmania</taxon>
        <taxon>Leishmania braziliensis species complex</taxon>
    </lineage>
</organism>